<gene>
    <name evidence="2" type="primary">rpsL</name>
    <name type="ordered locus">AnaeK_1929</name>
</gene>
<name>RS12_ANASK</name>
<feature type="chain" id="PRO_1000194116" description="Small ribosomal subunit protein uS12">
    <location>
        <begin position="1"/>
        <end position="123"/>
    </location>
</feature>
<feature type="modified residue" description="3-methylthioaspartic acid" evidence="1">
    <location>
        <position position="89"/>
    </location>
</feature>
<evidence type="ECO:0000250" key="1"/>
<evidence type="ECO:0000255" key="2">
    <source>
        <dbReference type="HAMAP-Rule" id="MF_00403"/>
    </source>
</evidence>
<evidence type="ECO:0000305" key="3"/>
<accession>B4UB95</accession>
<dbReference type="EMBL" id="CP001131">
    <property type="protein sequence ID" value="ACG73157.1"/>
    <property type="molecule type" value="Genomic_DNA"/>
</dbReference>
<dbReference type="RefSeq" id="WP_011421003.1">
    <property type="nucleotide sequence ID" value="NC_011145.1"/>
</dbReference>
<dbReference type="SMR" id="B4UB95"/>
<dbReference type="KEGG" id="ank:AnaeK_1929"/>
<dbReference type="HOGENOM" id="CLU_104295_1_2_7"/>
<dbReference type="OrthoDB" id="9802366at2"/>
<dbReference type="Proteomes" id="UP000001871">
    <property type="component" value="Chromosome"/>
</dbReference>
<dbReference type="GO" id="GO:0015935">
    <property type="term" value="C:small ribosomal subunit"/>
    <property type="evidence" value="ECO:0007669"/>
    <property type="project" value="InterPro"/>
</dbReference>
<dbReference type="GO" id="GO:0019843">
    <property type="term" value="F:rRNA binding"/>
    <property type="evidence" value="ECO:0007669"/>
    <property type="project" value="UniProtKB-UniRule"/>
</dbReference>
<dbReference type="GO" id="GO:0003735">
    <property type="term" value="F:structural constituent of ribosome"/>
    <property type="evidence" value="ECO:0007669"/>
    <property type="project" value="InterPro"/>
</dbReference>
<dbReference type="GO" id="GO:0000049">
    <property type="term" value="F:tRNA binding"/>
    <property type="evidence" value="ECO:0007669"/>
    <property type="project" value="UniProtKB-UniRule"/>
</dbReference>
<dbReference type="GO" id="GO:0006412">
    <property type="term" value="P:translation"/>
    <property type="evidence" value="ECO:0007669"/>
    <property type="project" value="UniProtKB-UniRule"/>
</dbReference>
<dbReference type="CDD" id="cd03368">
    <property type="entry name" value="Ribosomal_S12"/>
    <property type="match status" value="1"/>
</dbReference>
<dbReference type="FunFam" id="2.40.50.140:FF:000001">
    <property type="entry name" value="30S ribosomal protein S12"/>
    <property type="match status" value="1"/>
</dbReference>
<dbReference type="Gene3D" id="2.40.50.140">
    <property type="entry name" value="Nucleic acid-binding proteins"/>
    <property type="match status" value="1"/>
</dbReference>
<dbReference type="HAMAP" id="MF_00403_B">
    <property type="entry name" value="Ribosomal_uS12_B"/>
    <property type="match status" value="1"/>
</dbReference>
<dbReference type="InterPro" id="IPR012340">
    <property type="entry name" value="NA-bd_OB-fold"/>
</dbReference>
<dbReference type="InterPro" id="IPR006032">
    <property type="entry name" value="Ribosomal_uS12"/>
</dbReference>
<dbReference type="InterPro" id="IPR005679">
    <property type="entry name" value="Ribosomal_uS12_bac"/>
</dbReference>
<dbReference type="NCBIfam" id="TIGR00981">
    <property type="entry name" value="rpsL_bact"/>
    <property type="match status" value="1"/>
</dbReference>
<dbReference type="PANTHER" id="PTHR11652">
    <property type="entry name" value="30S RIBOSOMAL PROTEIN S12 FAMILY MEMBER"/>
    <property type="match status" value="1"/>
</dbReference>
<dbReference type="Pfam" id="PF00164">
    <property type="entry name" value="Ribosom_S12_S23"/>
    <property type="match status" value="1"/>
</dbReference>
<dbReference type="PIRSF" id="PIRSF002133">
    <property type="entry name" value="Ribosomal_S12/S23"/>
    <property type="match status" value="1"/>
</dbReference>
<dbReference type="PRINTS" id="PR01034">
    <property type="entry name" value="RIBOSOMALS12"/>
</dbReference>
<dbReference type="SUPFAM" id="SSF50249">
    <property type="entry name" value="Nucleic acid-binding proteins"/>
    <property type="match status" value="1"/>
</dbReference>
<dbReference type="PROSITE" id="PS00055">
    <property type="entry name" value="RIBOSOMAL_S12"/>
    <property type="match status" value="1"/>
</dbReference>
<sequence>MPTISQLVRRGRERLQVKKKAPALKESPQKRGVCTRVYTTTPKKPNSALRKVARVRLTNGFEVTSYIPGVGHNLQEHSVVLIRGGRVKDLPGVRYHIIRGTLDAVGVQGRKQGRSKYGAKRAS</sequence>
<keyword id="KW-0488">Methylation</keyword>
<keyword id="KW-0687">Ribonucleoprotein</keyword>
<keyword id="KW-0689">Ribosomal protein</keyword>
<keyword id="KW-0694">RNA-binding</keyword>
<keyword id="KW-0699">rRNA-binding</keyword>
<keyword id="KW-0820">tRNA-binding</keyword>
<comment type="function">
    <text evidence="2">With S4 and S5 plays an important role in translational accuracy.</text>
</comment>
<comment type="function">
    <text evidence="2">Interacts with and stabilizes bases of the 16S rRNA that are involved in tRNA selection in the A site and with the mRNA backbone. Located at the interface of the 30S and 50S subunits, it traverses the body of the 30S subunit contacting proteins on the other side and probably holding the rRNA structure together. The combined cluster of proteins S8, S12 and S17 appears to hold together the shoulder and platform of the 30S subunit.</text>
</comment>
<comment type="subunit">
    <text evidence="2">Part of the 30S ribosomal subunit. Contacts proteins S8 and S17. May interact with IF1 in the 30S initiation complex.</text>
</comment>
<comment type="similarity">
    <text evidence="2">Belongs to the universal ribosomal protein uS12 family.</text>
</comment>
<organism>
    <name type="scientific">Anaeromyxobacter sp. (strain K)</name>
    <dbReference type="NCBI Taxonomy" id="447217"/>
    <lineage>
        <taxon>Bacteria</taxon>
        <taxon>Pseudomonadati</taxon>
        <taxon>Myxococcota</taxon>
        <taxon>Myxococcia</taxon>
        <taxon>Myxococcales</taxon>
        <taxon>Cystobacterineae</taxon>
        <taxon>Anaeromyxobacteraceae</taxon>
        <taxon>Anaeromyxobacter</taxon>
    </lineage>
</organism>
<protein>
    <recommendedName>
        <fullName evidence="2">Small ribosomal subunit protein uS12</fullName>
    </recommendedName>
    <alternativeName>
        <fullName evidence="3">30S ribosomal protein S12</fullName>
    </alternativeName>
</protein>
<proteinExistence type="inferred from homology"/>
<reference key="1">
    <citation type="submission" date="2008-08" db="EMBL/GenBank/DDBJ databases">
        <title>Complete sequence of Anaeromyxobacter sp. K.</title>
        <authorList>
            <consortium name="US DOE Joint Genome Institute"/>
            <person name="Lucas S."/>
            <person name="Copeland A."/>
            <person name="Lapidus A."/>
            <person name="Glavina del Rio T."/>
            <person name="Dalin E."/>
            <person name="Tice H."/>
            <person name="Bruce D."/>
            <person name="Goodwin L."/>
            <person name="Pitluck S."/>
            <person name="Saunders E."/>
            <person name="Brettin T."/>
            <person name="Detter J.C."/>
            <person name="Han C."/>
            <person name="Larimer F."/>
            <person name="Land M."/>
            <person name="Hauser L."/>
            <person name="Kyrpides N."/>
            <person name="Ovchinnikiva G."/>
            <person name="Beliaev A."/>
        </authorList>
    </citation>
    <scope>NUCLEOTIDE SEQUENCE [LARGE SCALE GENOMIC DNA]</scope>
    <source>
        <strain>K</strain>
    </source>
</reference>